<name>Y1207_OCEIH</name>
<comment type="similarity">
    <text evidence="1">Belongs to the UPF0736 family.</text>
</comment>
<organism>
    <name type="scientific">Oceanobacillus iheyensis (strain DSM 14371 / CIP 107618 / JCM 11309 / KCTC 3954 / HTE831)</name>
    <dbReference type="NCBI Taxonomy" id="221109"/>
    <lineage>
        <taxon>Bacteria</taxon>
        <taxon>Bacillati</taxon>
        <taxon>Bacillota</taxon>
        <taxon>Bacilli</taxon>
        <taxon>Bacillales</taxon>
        <taxon>Bacillaceae</taxon>
        <taxon>Oceanobacillus</taxon>
    </lineage>
</organism>
<accession>Q8ERU3</accession>
<proteinExistence type="inferred from homology"/>
<gene>
    <name type="ordered locus">OB1207</name>
</gene>
<evidence type="ECO:0000255" key="1">
    <source>
        <dbReference type="HAMAP-Rule" id="MF_01860"/>
    </source>
</evidence>
<protein>
    <recommendedName>
        <fullName evidence="1">UPF0736 protein OB1207</fullName>
    </recommendedName>
</protein>
<sequence length="252" mass="30361">MYLHDVWVNWFEGEENGYNVCHFHEWRKEDTIELLDQVPLLYISKELLHYIENDMHDLPKSLLDTIYKRGYTRKGQKRTVVEYAAVVTDGDNILAFDTVGYYIPIRKSRLIPRQEQLVYDMIENNKPQNFEFDNKIHDKEYHMLSMPPEYVFGLTRKERQLKQLLMIGLDQLRTTNNKEELRYWLTEWDPKQYPSIRYMDEEQVWTALYDGVKHGWSSAHEDLCSKLIRGQAFLERMWEAEMGNEQHTSNQK</sequence>
<feature type="chain" id="PRO_0000369154" description="UPF0736 protein OB1207">
    <location>
        <begin position="1"/>
        <end position="252"/>
    </location>
</feature>
<reference key="1">
    <citation type="journal article" date="2002" name="Nucleic Acids Res.">
        <title>Genome sequence of Oceanobacillus iheyensis isolated from the Iheya Ridge and its unexpected adaptive capabilities to extreme environments.</title>
        <authorList>
            <person name="Takami H."/>
            <person name="Takaki Y."/>
            <person name="Uchiyama I."/>
        </authorList>
    </citation>
    <scope>NUCLEOTIDE SEQUENCE [LARGE SCALE GENOMIC DNA]</scope>
    <source>
        <strain>DSM 14371 / CIP 107618 / JCM 11309 / KCTC 3954 / HTE831</strain>
    </source>
</reference>
<keyword id="KW-1185">Reference proteome</keyword>
<dbReference type="EMBL" id="BA000028">
    <property type="protein sequence ID" value="BAC13163.1"/>
    <property type="molecule type" value="Genomic_DNA"/>
</dbReference>
<dbReference type="SMR" id="Q8ERU3"/>
<dbReference type="STRING" id="221109.gene:10733446"/>
<dbReference type="KEGG" id="oih:OB1207"/>
<dbReference type="eggNOG" id="ENOG502Z8PJ">
    <property type="taxonomic scope" value="Bacteria"/>
</dbReference>
<dbReference type="HOGENOM" id="CLU_1101152_0_0_9"/>
<dbReference type="Proteomes" id="UP000000822">
    <property type="component" value="Chromosome"/>
</dbReference>
<dbReference type="HAMAP" id="MF_01860">
    <property type="entry name" value="UPF0736"/>
    <property type="match status" value="1"/>
</dbReference>
<dbReference type="InterPro" id="IPR020909">
    <property type="entry name" value="UPF0736"/>
</dbReference>
<dbReference type="Pfam" id="PF12227">
    <property type="entry name" value="DUF3603"/>
    <property type="match status" value="1"/>
</dbReference>